<organism>
    <name type="scientific">Caenorhabditis briggsae</name>
    <dbReference type="NCBI Taxonomy" id="6238"/>
    <lineage>
        <taxon>Eukaryota</taxon>
        <taxon>Metazoa</taxon>
        <taxon>Ecdysozoa</taxon>
        <taxon>Nematoda</taxon>
        <taxon>Chromadorea</taxon>
        <taxon>Rhabditida</taxon>
        <taxon>Rhabditina</taxon>
        <taxon>Rhabditomorpha</taxon>
        <taxon>Rhabditoidea</taxon>
        <taxon>Rhabditidae</taxon>
        <taxon>Peloderinae</taxon>
        <taxon>Caenorhabditis</taxon>
    </lineage>
</organism>
<protein>
    <recommendedName>
        <fullName>Putative acid phosphatase 1</fullName>
        <ecNumber>3.1.3.2</ecNumber>
    </recommendedName>
</protein>
<name>ACP1_CAEBR</name>
<feature type="signal peptide" evidence="2">
    <location>
        <begin position="1"/>
        <end position="18"/>
    </location>
</feature>
<feature type="chain" id="PRO_0000248566" description="Putative acid phosphatase 1">
    <location>
        <begin position="19"/>
        <end position="426"/>
    </location>
</feature>
<feature type="topological domain" description="Extracellular" evidence="2">
    <location>
        <begin position="19"/>
        <end position="388"/>
    </location>
</feature>
<feature type="transmembrane region" description="Helical" evidence="2">
    <location>
        <begin position="389"/>
        <end position="409"/>
    </location>
</feature>
<feature type="topological domain" description="Cytoplasmic" evidence="2">
    <location>
        <begin position="410"/>
        <end position="426"/>
    </location>
</feature>
<feature type="active site" description="Nucleophile" evidence="1">
    <location>
        <position position="29"/>
    </location>
</feature>
<feature type="active site" description="Proton donor" evidence="1">
    <location>
        <position position="276"/>
    </location>
</feature>
<feature type="glycosylation site" description="N-linked (GlcNAc...) asparagine" evidence="2">
    <location>
        <position position="37"/>
    </location>
</feature>
<feature type="glycosylation site" description="N-linked (GlcNAc...) asparagine" evidence="2">
    <location>
        <position position="145"/>
    </location>
</feature>
<feature type="glycosylation site" description="N-linked (GlcNAc...) asparagine" evidence="2">
    <location>
        <position position="380"/>
    </location>
</feature>
<feature type="disulfide bond" evidence="1">
    <location>
        <begin position="133"/>
        <end position="369"/>
    </location>
</feature>
<evidence type="ECO:0000250" key="1"/>
<evidence type="ECO:0000255" key="2"/>
<evidence type="ECO:0000305" key="3"/>
<evidence type="ECO:0000312" key="4">
    <source>
        <dbReference type="WormBase" id="CBG14199"/>
    </source>
</evidence>
<gene>
    <name evidence="4" type="primary">acp-1</name>
    <name evidence="4" type="ORF">CBG14199</name>
</gene>
<accession>Q619N4</accession>
<accession>A8XJH9</accession>
<dbReference type="EC" id="3.1.3.2"/>
<dbReference type="EMBL" id="HE600983">
    <property type="protein sequence ID" value="CAP32804.3"/>
    <property type="molecule type" value="Genomic_DNA"/>
</dbReference>
<dbReference type="RefSeq" id="XP_002644366.1">
    <property type="nucleotide sequence ID" value="XM_002644320.1"/>
</dbReference>
<dbReference type="SMR" id="Q619N4"/>
<dbReference type="STRING" id="6238.Q619N4"/>
<dbReference type="GlyCosmos" id="Q619N4">
    <property type="glycosylation" value="3 sites, No reported glycans"/>
</dbReference>
<dbReference type="GeneID" id="8586361"/>
<dbReference type="KEGG" id="cbr:CBG_14199"/>
<dbReference type="CTD" id="8586361"/>
<dbReference type="WormBase" id="CBG14199">
    <property type="protein sequence ID" value="CBP38071"/>
    <property type="gene ID" value="WBGene00034774"/>
    <property type="gene designation" value="Cbr-acp-1"/>
</dbReference>
<dbReference type="eggNOG" id="KOG3720">
    <property type="taxonomic scope" value="Eukaryota"/>
</dbReference>
<dbReference type="HOGENOM" id="CLU_041834_0_0_1"/>
<dbReference type="InParanoid" id="Q619N4"/>
<dbReference type="OMA" id="MFPNATP"/>
<dbReference type="Proteomes" id="UP000008549">
    <property type="component" value="Unassembled WGS sequence"/>
</dbReference>
<dbReference type="GO" id="GO:0016020">
    <property type="term" value="C:membrane"/>
    <property type="evidence" value="ECO:0007669"/>
    <property type="project" value="UniProtKB-SubCell"/>
</dbReference>
<dbReference type="GO" id="GO:0003993">
    <property type="term" value="F:acid phosphatase activity"/>
    <property type="evidence" value="ECO:0007669"/>
    <property type="project" value="UniProtKB-EC"/>
</dbReference>
<dbReference type="GO" id="GO:0016791">
    <property type="term" value="F:phosphatase activity"/>
    <property type="evidence" value="ECO:0000318"/>
    <property type="project" value="GO_Central"/>
</dbReference>
<dbReference type="CDD" id="cd07061">
    <property type="entry name" value="HP_HAP_like"/>
    <property type="match status" value="1"/>
</dbReference>
<dbReference type="Gene3D" id="3.40.50.1240">
    <property type="entry name" value="Phosphoglycerate mutase-like"/>
    <property type="match status" value="1"/>
</dbReference>
<dbReference type="InterPro" id="IPR033379">
    <property type="entry name" value="Acid_Pase_AS"/>
</dbReference>
<dbReference type="InterPro" id="IPR000560">
    <property type="entry name" value="His_Pase_clade-2"/>
</dbReference>
<dbReference type="InterPro" id="IPR029033">
    <property type="entry name" value="His_PPase_superfam"/>
</dbReference>
<dbReference type="InterPro" id="IPR050645">
    <property type="entry name" value="Histidine_acid_phosphatase"/>
</dbReference>
<dbReference type="PANTHER" id="PTHR11567">
    <property type="entry name" value="ACID PHOSPHATASE-RELATED"/>
    <property type="match status" value="1"/>
</dbReference>
<dbReference type="PANTHER" id="PTHR11567:SF211">
    <property type="entry name" value="PROSTATIC ACID PHOSPHATASE"/>
    <property type="match status" value="1"/>
</dbReference>
<dbReference type="Pfam" id="PF00328">
    <property type="entry name" value="His_Phos_2"/>
    <property type="match status" value="1"/>
</dbReference>
<dbReference type="SUPFAM" id="SSF53254">
    <property type="entry name" value="Phosphoglycerate mutase-like"/>
    <property type="match status" value="1"/>
</dbReference>
<dbReference type="PROSITE" id="PS00616">
    <property type="entry name" value="HIS_ACID_PHOSPHAT_1"/>
    <property type="match status" value="1"/>
</dbReference>
<comment type="catalytic activity">
    <reaction>
        <text>a phosphate monoester + H2O = an alcohol + phosphate</text>
        <dbReference type="Rhea" id="RHEA:15017"/>
        <dbReference type="ChEBI" id="CHEBI:15377"/>
        <dbReference type="ChEBI" id="CHEBI:30879"/>
        <dbReference type="ChEBI" id="CHEBI:43474"/>
        <dbReference type="ChEBI" id="CHEBI:67140"/>
        <dbReference type="EC" id="3.1.3.2"/>
    </reaction>
</comment>
<comment type="subcellular location">
    <subcellularLocation>
        <location evidence="3">Membrane</location>
        <topology evidence="3">Single-pass type I membrane protein</topology>
    </subcellularLocation>
</comment>
<comment type="similarity">
    <text evidence="3">Belongs to the histidine acid phosphatase family.</text>
</comment>
<reference key="1">
    <citation type="journal article" date="2003" name="PLoS Biol.">
        <title>The genome sequence of Caenorhabditis briggsae: a platform for comparative genomics.</title>
        <authorList>
            <person name="Stein L.D."/>
            <person name="Bao Z."/>
            <person name="Blasiar D."/>
            <person name="Blumenthal T."/>
            <person name="Brent M.R."/>
            <person name="Chen N."/>
            <person name="Chinwalla A."/>
            <person name="Clarke L."/>
            <person name="Clee C."/>
            <person name="Coghlan A."/>
            <person name="Coulson A."/>
            <person name="D'Eustachio P."/>
            <person name="Fitch D.H.A."/>
            <person name="Fulton L.A."/>
            <person name="Fulton R.E."/>
            <person name="Griffiths-Jones S."/>
            <person name="Harris T.W."/>
            <person name="Hillier L.W."/>
            <person name="Kamath R."/>
            <person name="Kuwabara P.E."/>
            <person name="Mardis E.R."/>
            <person name="Marra M.A."/>
            <person name="Miner T.L."/>
            <person name="Minx P."/>
            <person name="Mullikin J.C."/>
            <person name="Plumb R.W."/>
            <person name="Rogers J."/>
            <person name="Schein J.E."/>
            <person name="Sohrmann M."/>
            <person name="Spieth J."/>
            <person name="Stajich J.E."/>
            <person name="Wei C."/>
            <person name="Willey D."/>
            <person name="Wilson R.K."/>
            <person name="Durbin R.M."/>
            <person name="Waterston R.H."/>
        </authorList>
    </citation>
    <scope>NUCLEOTIDE SEQUENCE [LARGE SCALE GENOMIC DNA]</scope>
    <source>
        <strain>AF16</strain>
    </source>
</reference>
<proteinExistence type="inferred from homology"/>
<sequence>MRVLFYVFPFVIFALSQAQLISVHVIFRHGARAPVLNVTSEEAKSYFYRGLGQLTDVCIEQAKLIGKVLKDRYVNTFVDARMLPTQLLFRSSPVERCLMTIQTVGNTMFVNSTPPVQTVAKPDDFLLVPKLDCAFQIDEWTNFFNLTENDKKQAKKNPWFISEKALRRATAASQTLQQRSDENLPALILEKDAGLAVPSWFNEEAYKESLTVFYKALAVMSSVGEYKSSKGIRVKTGLLLDKILNDIQEKVRCHEKNQKGHISCDRHKLQVFSTHDLLILPFLDALGIREAALGEDLPPKFLSAIIIETMLLDDIPFVKVFYRGDPRDITLRDMTGLVRNCPPNQALCPVNLFTSCCGEFITADPRRECYEEKADQQLHNWTMTTVSWILIGISAFLLIILIIMSYLAVRYKNRSVVTIKKVCLEN</sequence>
<keyword id="KW-1015">Disulfide bond</keyword>
<keyword id="KW-0325">Glycoprotein</keyword>
<keyword id="KW-0378">Hydrolase</keyword>
<keyword id="KW-0472">Membrane</keyword>
<keyword id="KW-1185">Reference proteome</keyword>
<keyword id="KW-0732">Signal</keyword>
<keyword id="KW-0812">Transmembrane</keyword>
<keyword id="KW-1133">Transmembrane helix</keyword>